<name>PMT6_ARATH</name>
<keyword id="KW-0256">Endoplasmic reticulum</keyword>
<keyword id="KW-0325">Glycoprotein</keyword>
<keyword id="KW-0472">Membrane</keyword>
<keyword id="KW-0489">Methyltransferase</keyword>
<keyword id="KW-1185">Reference proteome</keyword>
<keyword id="KW-0735">Signal-anchor</keyword>
<keyword id="KW-0808">Transferase</keyword>
<keyword id="KW-0812">Transmembrane</keyword>
<keyword id="KW-1133">Transmembrane helix</keyword>
<organism>
    <name type="scientific">Arabidopsis thaliana</name>
    <name type="common">Mouse-ear cress</name>
    <dbReference type="NCBI Taxonomy" id="3702"/>
    <lineage>
        <taxon>Eukaryota</taxon>
        <taxon>Viridiplantae</taxon>
        <taxon>Streptophyta</taxon>
        <taxon>Embryophyta</taxon>
        <taxon>Tracheophyta</taxon>
        <taxon>Spermatophyta</taxon>
        <taxon>Magnoliopsida</taxon>
        <taxon>eudicotyledons</taxon>
        <taxon>Gunneridae</taxon>
        <taxon>Pentapetalae</taxon>
        <taxon>rosids</taxon>
        <taxon>malvids</taxon>
        <taxon>Brassicales</taxon>
        <taxon>Brassicaceae</taxon>
        <taxon>Camelineae</taxon>
        <taxon>Arabidopsis</taxon>
    </lineage>
</organism>
<dbReference type="EC" id="2.1.1.-"/>
<dbReference type="EMBL" id="AC009400">
    <property type="protein sequence ID" value="AAF02822.1"/>
    <property type="status" value="ALT_SEQ"/>
    <property type="molecule type" value="Genomic_DNA"/>
</dbReference>
<dbReference type="EMBL" id="CP002686">
    <property type="protein sequence ID" value="AEE74871.1"/>
    <property type="molecule type" value="Genomic_DNA"/>
</dbReference>
<dbReference type="EMBL" id="BT005741">
    <property type="protein sequence ID" value="AAO64151.1"/>
    <property type="molecule type" value="mRNA"/>
</dbReference>
<dbReference type="EMBL" id="AK228597">
    <property type="protein sequence ID" value="BAF00512.1"/>
    <property type="molecule type" value="mRNA"/>
</dbReference>
<dbReference type="RefSeq" id="NP_187631.2">
    <property type="nucleotide sequence ID" value="NM_111855.4"/>
</dbReference>
<dbReference type="FunCoup" id="Q84TJ0">
    <property type="interactions" value="152"/>
</dbReference>
<dbReference type="GlyGen" id="Q84TJ0">
    <property type="glycosylation" value="8 sites"/>
</dbReference>
<dbReference type="PaxDb" id="3702-AT3G10200.1"/>
<dbReference type="ProteomicsDB" id="236576"/>
<dbReference type="EnsemblPlants" id="AT3G10200.1">
    <property type="protein sequence ID" value="AT3G10200.1"/>
    <property type="gene ID" value="AT3G10200"/>
</dbReference>
<dbReference type="GeneID" id="820182"/>
<dbReference type="Gramene" id="AT3G10200.1">
    <property type="protein sequence ID" value="AT3G10200.1"/>
    <property type="gene ID" value="AT3G10200"/>
</dbReference>
<dbReference type="KEGG" id="ath:AT3G10200"/>
<dbReference type="Araport" id="AT3G10200"/>
<dbReference type="TAIR" id="AT3G10200"/>
<dbReference type="eggNOG" id="ENOG502QTJJ">
    <property type="taxonomic scope" value="Eukaryota"/>
</dbReference>
<dbReference type="HOGENOM" id="CLU_010485_2_3_1"/>
<dbReference type="InParanoid" id="Q84TJ0"/>
<dbReference type="OMA" id="CQFEDIM"/>
<dbReference type="PhylomeDB" id="Q84TJ0"/>
<dbReference type="PRO" id="PR:Q84TJ0"/>
<dbReference type="Proteomes" id="UP000006548">
    <property type="component" value="Chromosome 3"/>
</dbReference>
<dbReference type="ExpressionAtlas" id="Q84TJ0">
    <property type="expression patterns" value="baseline and differential"/>
</dbReference>
<dbReference type="GO" id="GO:0005789">
    <property type="term" value="C:endoplasmic reticulum membrane"/>
    <property type="evidence" value="ECO:0007669"/>
    <property type="project" value="UniProtKB-SubCell"/>
</dbReference>
<dbReference type="GO" id="GO:0008168">
    <property type="term" value="F:methyltransferase activity"/>
    <property type="evidence" value="ECO:0007669"/>
    <property type="project" value="UniProtKB-KW"/>
</dbReference>
<dbReference type="GO" id="GO:0032259">
    <property type="term" value="P:methylation"/>
    <property type="evidence" value="ECO:0007669"/>
    <property type="project" value="UniProtKB-KW"/>
</dbReference>
<dbReference type="CDD" id="cd02440">
    <property type="entry name" value="AdoMet_MTases"/>
    <property type="match status" value="1"/>
</dbReference>
<dbReference type="FunFam" id="3.40.50.150:FF:000170">
    <property type="entry name" value="Probable methyltransferase PMT6"/>
    <property type="match status" value="1"/>
</dbReference>
<dbReference type="Gene3D" id="3.40.50.150">
    <property type="entry name" value="Vaccinia Virus protein VP39"/>
    <property type="match status" value="1"/>
</dbReference>
<dbReference type="InterPro" id="IPR004159">
    <property type="entry name" value="Put_SAM_MeTrfase"/>
</dbReference>
<dbReference type="InterPro" id="IPR029063">
    <property type="entry name" value="SAM-dependent_MTases_sf"/>
</dbReference>
<dbReference type="PANTHER" id="PTHR10108:SF37">
    <property type="entry name" value="METHYLTRANSFERASE PMT6-RELATED"/>
    <property type="match status" value="1"/>
</dbReference>
<dbReference type="PANTHER" id="PTHR10108">
    <property type="entry name" value="SAM-DEPENDENT METHYLTRANSFERASE"/>
    <property type="match status" value="1"/>
</dbReference>
<dbReference type="Pfam" id="PF03141">
    <property type="entry name" value="Methyltransf_29"/>
    <property type="match status" value="1"/>
</dbReference>
<dbReference type="SUPFAM" id="SSF53335">
    <property type="entry name" value="S-adenosyl-L-methionine-dependent methyltransferases"/>
    <property type="match status" value="2"/>
</dbReference>
<accession>Q84TJ0</accession>
<accession>Q9SS32</accession>
<reference key="1">
    <citation type="journal article" date="2000" name="Nature">
        <title>Sequence and analysis of chromosome 3 of the plant Arabidopsis thaliana.</title>
        <authorList>
            <person name="Salanoubat M."/>
            <person name="Lemcke K."/>
            <person name="Rieger M."/>
            <person name="Ansorge W."/>
            <person name="Unseld M."/>
            <person name="Fartmann B."/>
            <person name="Valle G."/>
            <person name="Bloecker H."/>
            <person name="Perez-Alonso M."/>
            <person name="Obermaier B."/>
            <person name="Delseny M."/>
            <person name="Boutry M."/>
            <person name="Grivell L.A."/>
            <person name="Mache R."/>
            <person name="Puigdomenech P."/>
            <person name="De Simone V."/>
            <person name="Choisne N."/>
            <person name="Artiguenave F."/>
            <person name="Robert C."/>
            <person name="Brottier P."/>
            <person name="Wincker P."/>
            <person name="Cattolico L."/>
            <person name="Weissenbach J."/>
            <person name="Saurin W."/>
            <person name="Quetier F."/>
            <person name="Schaefer M."/>
            <person name="Mueller-Auer S."/>
            <person name="Gabel C."/>
            <person name="Fuchs M."/>
            <person name="Benes V."/>
            <person name="Wurmbach E."/>
            <person name="Drzonek H."/>
            <person name="Erfle H."/>
            <person name="Jordan N."/>
            <person name="Bangert S."/>
            <person name="Wiedelmann R."/>
            <person name="Kranz H."/>
            <person name="Voss H."/>
            <person name="Holland R."/>
            <person name="Brandt P."/>
            <person name="Nyakatura G."/>
            <person name="Vezzi A."/>
            <person name="D'Angelo M."/>
            <person name="Pallavicini A."/>
            <person name="Toppo S."/>
            <person name="Simionati B."/>
            <person name="Conrad A."/>
            <person name="Hornischer K."/>
            <person name="Kauer G."/>
            <person name="Loehnert T.-H."/>
            <person name="Nordsiek G."/>
            <person name="Reichelt J."/>
            <person name="Scharfe M."/>
            <person name="Schoen O."/>
            <person name="Bargues M."/>
            <person name="Terol J."/>
            <person name="Climent J."/>
            <person name="Navarro P."/>
            <person name="Collado C."/>
            <person name="Perez-Perez A."/>
            <person name="Ottenwaelder B."/>
            <person name="Duchemin D."/>
            <person name="Cooke R."/>
            <person name="Laudie M."/>
            <person name="Berger-Llauro C."/>
            <person name="Purnelle B."/>
            <person name="Masuy D."/>
            <person name="de Haan M."/>
            <person name="Maarse A.C."/>
            <person name="Alcaraz J.-P."/>
            <person name="Cottet A."/>
            <person name="Casacuberta E."/>
            <person name="Monfort A."/>
            <person name="Argiriou A."/>
            <person name="Flores M."/>
            <person name="Liguori R."/>
            <person name="Vitale D."/>
            <person name="Mannhaupt G."/>
            <person name="Haase D."/>
            <person name="Schoof H."/>
            <person name="Rudd S."/>
            <person name="Zaccaria P."/>
            <person name="Mewes H.-W."/>
            <person name="Mayer K.F.X."/>
            <person name="Kaul S."/>
            <person name="Town C.D."/>
            <person name="Koo H.L."/>
            <person name="Tallon L.J."/>
            <person name="Jenkins J."/>
            <person name="Rooney T."/>
            <person name="Rizzo M."/>
            <person name="Walts A."/>
            <person name="Utterback T."/>
            <person name="Fujii C.Y."/>
            <person name="Shea T.P."/>
            <person name="Creasy T.H."/>
            <person name="Haas B."/>
            <person name="Maiti R."/>
            <person name="Wu D."/>
            <person name="Peterson J."/>
            <person name="Van Aken S."/>
            <person name="Pai G."/>
            <person name="Militscher J."/>
            <person name="Sellers P."/>
            <person name="Gill J.E."/>
            <person name="Feldblyum T.V."/>
            <person name="Preuss D."/>
            <person name="Lin X."/>
            <person name="Nierman W.C."/>
            <person name="Salzberg S.L."/>
            <person name="White O."/>
            <person name="Venter J.C."/>
            <person name="Fraser C.M."/>
            <person name="Kaneko T."/>
            <person name="Nakamura Y."/>
            <person name="Sato S."/>
            <person name="Kato T."/>
            <person name="Asamizu E."/>
            <person name="Sasamoto S."/>
            <person name="Kimura T."/>
            <person name="Idesawa K."/>
            <person name="Kawashima K."/>
            <person name="Kishida Y."/>
            <person name="Kiyokawa C."/>
            <person name="Kohara M."/>
            <person name="Matsumoto M."/>
            <person name="Matsuno A."/>
            <person name="Muraki A."/>
            <person name="Nakayama S."/>
            <person name="Nakazaki N."/>
            <person name="Shinpo S."/>
            <person name="Takeuchi C."/>
            <person name="Wada T."/>
            <person name="Watanabe A."/>
            <person name="Yamada M."/>
            <person name="Yasuda M."/>
            <person name="Tabata S."/>
        </authorList>
    </citation>
    <scope>NUCLEOTIDE SEQUENCE [LARGE SCALE GENOMIC DNA]</scope>
    <source>
        <strain>cv. Columbia</strain>
    </source>
</reference>
<reference key="2">
    <citation type="journal article" date="2017" name="Plant J.">
        <title>Araport11: a complete reannotation of the Arabidopsis thaliana reference genome.</title>
        <authorList>
            <person name="Cheng C.Y."/>
            <person name="Krishnakumar V."/>
            <person name="Chan A.P."/>
            <person name="Thibaud-Nissen F."/>
            <person name="Schobel S."/>
            <person name="Town C.D."/>
        </authorList>
    </citation>
    <scope>GENOME REANNOTATION</scope>
    <source>
        <strain>cv. Columbia</strain>
    </source>
</reference>
<reference key="3">
    <citation type="journal article" date="2003" name="Science">
        <title>Empirical analysis of transcriptional activity in the Arabidopsis genome.</title>
        <authorList>
            <person name="Yamada K."/>
            <person name="Lim J."/>
            <person name="Dale J.M."/>
            <person name="Chen H."/>
            <person name="Shinn P."/>
            <person name="Palm C.J."/>
            <person name="Southwick A.M."/>
            <person name="Wu H.C."/>
            <person name="Kim C.J."/>
            <person name="Nguyen M."/>
            <person name="Pham P.K."/>
            <person name="Cheuk R.F."/>
            <person name="Karlin-Newmann G."/>
            <person name="Liu S.X."/>
            <person name="Lam B."/>
            <person name="Sakano H."/>
            <person name="Wu T."/>
            <person name="Yu G."/>
            <person name="Miranda M."/>
            <person name="Quach H.L."/>
            <person name="Tripp M."/>
            <person name="Chang C.H."/>
            <person name="Lee J.M."/>
            <person name="Toriumi M.J."/>
            <person name="Chan M.M."/>
            <person name="Tang C.C."/>
            <person name="Onodera C.S."/>
            <person name="Deng J.M."/>
            <person name="Akiyama K."/>
            <person name="Ansari Y."/>
            <person name="Arakawa T."/>
            <person name="Banh J."/>
            <person name="Banno F."/>
            <person name="Bowser L."/>
            <person name="Brooks S.Y."/>
            <person name="Carninci P."/>
            <person name="Chao Q."/>
            <person name="Choy N."/>
            <person name="Enju A."/>
            <person name="Goldsmith A.D."/>
            <person name="Gurjal M."/>
            <person name="Hansen N.F."/>
            <person name="Hayashizaki Y."/>
            <person name="Johnson-Hopson C."/>
            <person name="Hsuan V.W."/>
            <person name="Iida K."/>
            <person name="Karnes M."/>
            <person name="Khan S."/>
            <person name="Koesema E."/>
            <person name="Ishida J."/>
            <person name="Jiang P.X."/>
            <person name="Jones T."/>
            <person name="Kawai J."/>
            <person name="Kamiya A."/>
            <person name="Meyers C."/>
            <person name="Nakajima M."/>
            <person name="Narusaka M."/>
            <person name="Seki M."/>
            <person name="Sakurai T."/>
            <person name="Satou M."/>
            <person name="Tamse R."/>
            <person name="Vaysberg M."/>
            <person name="Wallender E.K."/>
            <person name="Wong C."/>
            <person name="Yamamura Y."/>
            <person name="Yuan S."/>
            <person name="Shinozaki K."/>
            <person name="Davis R.W."/>
            <person name="Theologis A."/>
            <person name="Ecker J.R."/>
        </authorList>
    </citation>
    <scope>NUCLEOTIDE SEQUENCE [LARGE SCALE MRNA]</scope>
    <source>
        <strain>cv. Columbia</strain>
    </source>
</reference>
<reference key="4">
    <citation type="submission" date="2006-07" db="EMBL/GenBank/DDBJ databases">
        <title>Large-scale analysis of RIKEN Arabidopsis full-length (RAFL) cDNAs.</title>
        <authorList>
            <person name="Totoki Y."/>
            <person name="Seki M."/>
            <person name="Ishida J."/>
            <person name="Nakajima M."/>
            <person name="Enju A."/>
            <person name="Kamiya A."/>
            <person name="Narusaka M."/>
            <person name="Shin-i T."/>
            <person name="Nakagawa M."/>
            <person name="Sakamoto N."/>
            <person name="Oishi K."/>
            <person name="Kohara Y."/>
            <person name="Kobayashi M."/>
            <person name="Toyoda A."/>
            <person name="Sakaki Y."/>
            <person name="Sakurai T."/>
            <person name="Iida K."/>
            <person name="Akiyama K."/>
            <person name="Satou M."/>
            <person name="Toyoda T."/>
            <person name="Konagaya A."/>
            <person name="Carninci P."/>
            <person name="Kawai J."/>
            <person name="Hayashizaki Y."/>
            <person name="Shinozaki K."/>
        </authorList>
    </citation>
    <scope>NUCLEOTIDE SEQUENCE [LARGE SCALE MRNA]</scope>
    <source>
        <strain>cv. Columbia</strain>
    </source>
</reference>
<reference key="5">
    <citation type="journal article" date="2007" name="Plant J.">
        <title>The TUMOROUS SHOOT DEVELOPMENT2 gene of Arabidopsis encoding a putative methyltransferase is required for cell adhesion and co-ordinated plant development.</title>
        <authorList>
            <person name="Krupkova E."/>
            <person name="Immerzeel P."/>
            <person name="Pauly M."/>
            <person name="Schmulling T."/>
        </authorList>
    </citation>
    <scope>GENE FAMILY</scope>
</reference>
<proteinExistence type="evidence at transcript level"/>
<protein>
    <recommendedName>
        <fullName>Probable methyltransferase PMT6</fullName>
        <ecNumber>2.1.1.-</ecNumber>
    </recommendedName>
</protein>
<comment type="subcellular location">
    <subcellularLocation>
        <location evidence="2">Endoplasmic reticulum membrane</location>
        <topology evidence="2">Single-pass type II membrane protein</topology>
    </subcellularLocation>
</comment>
<comment type="similarity">
    <text evidence="2">Belongs to the methyltransferase superfamily.</text>
</comment>
<comment type="sequence caution" evidence="2">
    <conflict type="erroneous gene model prediction">
        <sequence resource="EMBL-CDS" id="AAF02822"/>
    </conflict>
</comment>
<sequence length="591" mass="67648">MRGSVIGAERSGQTIMVALVLMVGSFYTGSLFGTNQPIYVSHPSSHSASSKFANKIELTYRRLPLVIPESGMNVCPLEFNEYIPCHNVTYVHQLLPSLNLSRREDLERHCPPLEHRLFCLVPPPNDYKIPIRWPTSRDYVWRSNVNHTHLAQVKGGQNWVHEQGQFWWFPGGGTHFKHGAAEYIQRLGNMMTNETGDLRSAGVVQVLDVGCGVASFAAYLLPLGIQTISFAPKDGHENQIQFALERGIGAMISAVATKQLPYPAASFEMVHCSRCRVDWHTNDGILLKEVHRLLRPNGFFVYSSPPAYRKDKEYPMIWDKLVNLTSAMCWKLISRKVQTAIWIKEEKEVCLKQKAELKLISLCDVEDVLKPSWKVPLKDCVQISGQTEERPSSLAERLSAYPATLRKIGISEDEYTSDTVFWREQVNHYWRLMNVNETEVRNVMDMNAFIGGFAAAMNSYPVWVMNIVPATMNDTLSGIFERGLNGAFHDWCEAFSTYPRTYDLVHSDHVFSHYNKSYGDGCLLEDIMLEMDRIVRPQGFVIIRDEEYIISRIRGLAPKFLWEVETHELENKDKKITESVLFCRKRFWAII</sequence>
<evidence type="ECO:0000255" key="1"/>
<evidence type="ECO:0000305" key="2"/>
<feature type="chain" id="PRO_0000393246" description="Probable methyltransferase PMT6">
    <location>
        <begin position="1"/>
        <end position="591"/>
    </location>
</feature>
<feature type="topological domain" description="Cytoplasmic" evidence="1">
    <location>
        <begin position="1"/>
        <end position="13"/>
    </location>
</feature>
<feature type="transmembrane region" description="Helical; Signal-anchor for type II membrane protein" evidence="1">
    <location>
        <begin position="14"/>
        <end position="34"/>
    </location>
</feature>
<feature type="topological domain" description="Lumenal" evidence="1">
    <location>
        <begin position="35"/>
        <end position="591"/>
    </location>
</feature>
<feature type="glycosylation site" description="N-linked (GlcNAc...) asparagine" evidence="1">
    <location>
        <position position="87"/>
    </location>
</feature>
<feature type="glycosylation site" description="N-linked (GlcNAc...) asparagine" evidence="1">
    <location>
        <position position="99"/>
    </location>
</feature>
<feature type="glycosylation site" description="N-linked (GlcNAc...) asparagine" evidence="1">
    <location>
        <position position="146"/>
    </location>
</feature>
<feature type="glycosylation site" description="N-linked (GlcNAc...) asparagine" evidence="1">
    <location>
        <position position="193"/>
    </location>
</feature>
<feature type="glycosylation site" description="N-linked (GlcNAc...) asparagine" evidence="1">
    <location>
        <position position="323"/>
    </location>
</feature>
<feature type="glycosylation site" description="N-linked (GlcNAc...) asparagine" evidence="1">
    <location>
        <position position="436"/>
    </location>
</feature>
<feature type="glycosylation site" description="N-linked (GlcNAc...) asparagine" evidence="1">
    <location>
        <position position="473"/>
    </location>
</feature>
<feature type="glycosylation site" description="N-linked (GlcNAc...) asparagine" evidence="1">
    <location>
        <position position="515"/>
    </location>
</feature>
<gene>
    <name type="ordered locus">At3g10200</name>
    <name type="ORF">F14P13.20</name>
</gene>